<evidence type="ECO:0000250" key="1"/>
<evidence type="ECO:0000256" key="2">
    <source>
        <dbReference type="SAM" id="MobiDB-lite"/>
    </source>
</evidence>
<evidence type="ECO:0000305" key="3"/>
<reference key="1">
    <citation type="journal article" date="2007" name="Plant Cell">
        <title>Dothideomycete-plant interactions illuminated by genome sequencing and EST analysis of the wheat pathogen Stagonospora nodorum.</title>
        <authorList>
            <person name="Hane J.K."/>
            <person name="Lowe R.G.T."/>
            <person name="Solomon P.S."/>
            <person name="Tan K.-C."/>
            <person name="Schoch C.L."/>
            <person name="Spatafora J.W."/>
            <person name="Crous P.W."/>
            <person name="Kodira C.D."/>
            <person name="Birren B.W."/>
            <person name="Galagan J.E."/>
            <person name="Torriani S.F.F."/>
            <person name="McDonald B.A."/>
            <person name="Oliver R.P."/>
        </authorList>
    </citation>
    <scope>NUCLEOTIDE SEQUENCE [LARGE SCALE GENOMIC DNA]</scope>
    <source>
        <strain>SN15 / ATCC MYA-4574 / FGSC 10173</strain>
    </source>
</reference>
<proteinExistence type="inferred from homology"/>
<comment type="function">
    <text evidence="1">Component of the Mediator complex, a coactivator involved in the regulated transcription of nearly all RNA polymerase II-dependent genes. Mediator functions as a bridge to convey information from gene-specific regulatory proteins to the basal RNA polymerase II transcription machinery. Mediator is recruited to promoters by direct interactions with regulatory proteins and serves as a scaffold for the assembly of a functional preinitiation complex with RNA polymerase II and the general transcription factors (By similarity).</text>
</comment>
<comment type="subunit">
    <text evidence="1">Component of the Mediator complex.</text>
</comment>
<comment type="subcellular location">
    <subcellularLocation>
        <location evidence="1">Nucleus</location>
    </subcellularLocation>
</comment>
<comment type="similarity">
    <text evidence="3">Belongs to the Mediator complex subunit 10 family.</text>
</comment>
<comment type="sequence caution" evidence="3">
    <conflict type="erroneous gene model prediction">
        <sequence resource="EMBL-CDS" id="EAT80859"/>
    </conflict>
</comment>
<keyword id="KW-0010">Activator</keyword>
<keyword id="KW-0539">Nucleus</keyword>
<keyword id="KW-0804">Transcription</keyword>
<keyword id="KW-0805">Transcription regulation</keyword>
<accession>Q0U8U9</accession>
<organism>
    <name type="scientific">Phaeosphaeria nodorum (strain SN15 / ATCC MYA-4574 / FGSC 10173)</name>
    <name type="common">Glume blotch fungus</name>
    <name type="synonym">Parastagonospora nodorum</name>
    <dbReference type="NCBI Taxonomy" id="321614"/>
    <lineage>
        <taxon>Eukaryota</taxon>
        <taxon>Fungi</taxon>
        <taxon>Dikarya</taxon>
        <taxon>Ascomycota</taxon>
        <taxon>Pezizomycotina</taxon>
        <taxon>Dothideomycetes</taxon>
        <taxon>Pleosporomycetidae</taxon>
        <taxon>Pleosporales</taxon>
        <taxon>Pleosporineae</taxon>
        <taxon>Phaeosphaeriaceae</taxon>
        <taxon>Parastagonospora</taxon>
    </lineage>
</organism>
<feature type="chain" id="PRO_0000303175" description="Mediator of RNA polymerase II transcription subunit 10">
    <location>
        <begin position="1"/>
        <end position="133"/>
    </location>
</feature>
<feature type="region of interest" description="Disordered" evidence="2">
    <location>
        <begin position="1"/>
        <end position="28"/>
    </location>
</feature>
<feature type="compositionally biased region" description="Polar residues" evidence="2">
    <location>
        <begin position="1"/>
        <end position="13"/>
    </location>
</feature>
<feature type="compositionally biased region" description="Basic and acidic residues" evidence="2">
    <location>
        <begin position="15"/>
        <end position="28"/>
    </location>
</feature>
<dbReference type="EMBL" id="CH445344">
    <property type="protein sequence ID" value="EAT80859.2"/>
    <property type="status" value="ALT_SEQ"/>
    <property type="molecule type" value="Genomic_DNA"/>
</dbReference>
<dbReference type="RefSeq" id="XP_001802052.1">
    <property type="nucleotide sequence ID" value="XM_001802000.1"/>
</dbReference>
<dbReference type="SMR" id="Q0U8U9"/>
<dbReference type="FunCoup" id="Q0U8U9">
    <property type="interactions" value="533"/>
</dbReference>
<dbReference type="STRING" id="321614.Q0U8U9"/>
<dbReference type="GeneID" id="5978960"/>
<dbReference type="KEGG" id="pno:SNOG_11815"/>
<dbReference type="VEuPathDB" id="FungiDB:JI435_118150"/>
<dbReference type="eggNOG" id="KOG3046">
    <property type="taxonomic scope" value="Eukaryota"/>
</dbReference>
<dbReference type="InParanoid" id="Q0U8U9"/>
<dbReference type="OMA" id="QYQRAKM"/>
<dbReference type="Proteomes" id="UP000001055">
    <property type="component" value="Unassembled WGS sequence"/>
</dbReference>
<dbReference type="GO" id="GO:0016592">
    <property type="term" value="C:mediator complex"/>
    <property type="evidence" value="ECO:0007669"/>
    <property type="project" value="InterPro"/>
</dbReference>
<dbReference type="GO" id="GO:0003712">
    <property type="term" value="F:transcription coregulator activity"/>
    <property type="evidence" value="ECO:0007669"/>
    <property type="project" value="InterPro"/>
</dbReference>
<dbReference type="GO" id="GO:0006357">
    <property type="term" value="P:regulation of transcription by RNA polymerase II"/>
    <property type="evidence" value="ECO:0007669"/>
    <property type="project" value="InterPro"/>
</dbReference>
<dbReference type="InterPro" id="IPR019145">
    <property type="entry name" value="Mediator_Med10"/>
</dbReference>
<dbReference type="Pfam" id="PF09748">
    <property type="entry name" value="Med10"/>
    <property type="match status" value="1"/>
</dbReference>
<sequence length="133" mass="14842">MSTEASTGETPEFQSYDHRGSPTQEAMKREIQSLIQNLVKLSRTAPAIHVLIPPEIVMYVEGSRNPDIYNREFVETVQRMNQMLKGRSEALQALQAQIAHQLQIAIPEMKDDIERAVEATGGKVPITGITLDP</sequence>
<gene>
    <name type="primary">NUT2</name>
    <name type="synonym">MED10</name>
    <name type="ORF">SNOG_11815</name>
</gene>
<name>MED10_PHANO</name>
<protein>
    <recommendedName>
        <fullName>Mediator of RNA polymerase II transcription subunit 10</fullName>
    </recommendedName>
    <alternativeName>
        <fullName>Mediator complex subunit 10</fullName>
    </alternativeName>
</protein>